<sequence length="344" mass="38687">MRNVQDQPLVSPTEPMIDPFGRAVTYLRVSVTDRCDFRCTYCMAEHMTFLPKKDLLTLEELDRLCSVFIEKGVRKLRLTGGEPLVRKNIMHLIGNLSRHLKSGALDELTLTTNGSQLARFAGELADCGVRRINVSLDTLNPEKFRTITRWGDLSRVLEGIDAAQKAAIHVKINAVALKDFNDAEIPELIRWAHGRGMDVTLIETMPMGEIEFDRTDQYLPLSQVRADLASQFTLADIPYRTGGPARYVTISETGGRLGFITPMTYNFCESCNRVRLTCTGMLYMCLGQNDDADLRKALRESESDEHLSQAIDEAISRKPKGHDFIIDREHNRPSVARHMSLTGG</sequence>
<feature type="chain" id="PRO_1000139314" description="GTP 3',8-cyclase">
    <location>
        <begin position="1"/>
        <end position="344"/>
    </location>
</feature>
<feature type="domain" description="Radical SAM core" evidence="2">
    <location>
        <begin position="19"/>
        <end position="245"/>
    </location>
</feature>
<feature type="binding site" evidence="1">
    <location>
        <position position="28"/>
    </location>
    <ligand>
        <name>GTP</name>
        <dbReference type="ChEBI" id="CHEBI:37565"/>
    </ligand>
</feature>
<feature type="binding site" evidence="1">
    <location>
        <position position="35"/>
    </location>
    <ligand>
        <name>[4Fe-4S] cluster</name>
        <dbReference type="ChEBI" id="CHEBI:49883"/>
        <label>1</label>
        <note>4Fe-4S-S-AdoMet</note>
    </ligand>
</feature>
<feature type="binding site" evidence="1">
    <location>
        <position position="39"/>
    </location>
    <ligand>
        <name>[4Fe-4S] cluster</name>
        <dbReference type="ChEBI" id="CHEBI:49883"/>
        <label>1</label>
        <note>4Fe-4S-S-AdoMet</note>
    </ligand>
</feature>
<feature type="binding site" evidence="1">
    <location>
        <position position="41"/>
    </location>
    <ligand>
        <name>S-adenosyl-L-methionine</name>
        <dbReference type="ChEBI" id="CHEBI:59789"/>
    </ligand>
</feature>
<feature type="binding site" evidence="1">
    <location>
        <position position="42"/>
    </location>
    <ligand>
        <name>[4Fe-4S] cluster</name>
        <dbReference type="ChEBI" id="CHEBI:49883"/>
        <label>1</label>
        <note>4Fe-4S-S-AdoMet</note>
    </ligand>
</feature>
<feature type="binding site" evidence="1">
    <location>
        <position position="77"/>
    </location>
    <ligand>
        <name>GTP</name>
        <dbReference type="ChEBI" id="CHEBI:37565"/>
    </ligand>
</feature>
<feature type="binding site" evidence="1">
    <location>
        <position position="81"/>
    </location>
    <ligand>
        <name>S-adenosyl-L-methionine</name>
        <dbReference type="ChEBI" id="CHEBI:59789"/>
    </ligand>
</feature>
<feature type="binding site" evidence="1">
    <location>
        <position position="111"/>
    </location>
    <ligand>
        <name>GTP</name>
        <dbReference type="ChEBI" id="CHEBI:37565"/>
    </ligand>
</feature>
<feature type="binding site" evidence="1">
    <location>
        <position position="135"/>
    </location>
    <ligand>
        <name>S-adenosyl-L-methionine</name>
        <dbReference type="ChEBI" id="CHEBI:59789"/>
    </ligand>
</feature>
<feature type="binding site" evidence="1">
    <location>
        <position position="171"/>
    </location>
    <ligand>
        <name>GTP</name>
        <dbReference type="ChEBI" id="CHEBI:37565"/>
    </ligand>
</feature>
<feature type="binding site" evidence="1">
    <location>
        <position position="205"/>
    </location>
    <ligand>
        <name>S-adenosyl-L-methionine</name>
        <dbReference type="ChEBI" id="CHEBI:59789"/>
    </ligand>
</feature>
<feature type="binding site" evidence="1">
    <location>
        <position position="268"/>
    </location>
    <ligand>
        <name>[4Fe-4S] cluster</name>
        <dbReference type="ChEBI" id="CHEBI:49883"/>
        <label>2</label>
        <note>4Fe-4S-substrate</note>
    </ligand>
</feature>
<feature type="binding site" evidence="1">
    <location>
        <position position="271"/>
    </location>
    <ligand>
        <name>[4Fe-4S] cluster</name>
        <dbReference type="ChEBI" id="CHEBI:49883"/>
        <label>2</label>
        <note>4Fe-4S-substrate</note>
    </ligand>
</feature>
<feature type="binding site" evidence="1">
    <location>
        <begin position="273"/>
        <end position="275"/>
    </location>
    <ligand>
        <name>GTP</name>
        <dbReference type="ChEBI" id="CHEBI:37565"/>
    </ligand>
</feature>
<feature type="binding site" evidence="1">
    <location>
        <position position="285"/>
    </location>
    <ligand>
        <name>[4Fe-4S] cluster</name>
        <dbReference type="ChEBI" id="CHEBI:49883"/>
        <label>2</label>
        <note>4Fe-4S-substrate</note>
    </ligand>
</feature>
<organism>
    <name type="scientific">Brucella abortus (strain S19)</name>
    <dbReference type="NCBI Taxonomy" id="430066"/>
    <lineage>
        <taxon>Bacteria</taxon>
        <taxon>Pseudomonadati</taxon>
        <taxon>Pseudomonadota</taxon>
        <taxon>Alphaproteobacteria</taxon>
        <taxon>Hyphomicrobiales</taxon>
        <taxon>Brucellaceae</taxon>
        <taxon>Brucella/Ochrobactrum group</taxon>
        <taxon>Brucella</taxon>
    </lineage>
</organism>
<name>MOAA_BRUA1</name>
<protein>
    <recommendedName>
        <fullName evidence="1">GTP 3',8-cyclase</fullName>
        <ecNumber evidence="1">4.1.99.22</ecNumber>
    </recommendedName>
    <alternativeName>
        <fullName evidence="1">Molybdenum cofactor biosynthesis protein A</fullName>
    </alternativeName>
</protein>
<proteinExistence type="inferred from homology"/>
<dbReference type="EC" id="4.1.99.22" evidence="1"/>
<dbReference type="EMBL" id="CP000887">
    <property type="protein sequence ID" value="ACD72428.1"/>
    <property type="molecule type" value="Genomic_DNA"/>
</dbReference>
<dbReference type="RefSeq" id="WP_002966802.1">
    <property type="nucleotide sequence ID" value="NC_010742.1"/>
</dbReference>
<dbReference type="SMR" id="B2S5I1"/>
<dbReference type="GeneID" id="93016679"/>
<dbReference type="KEGG" id="bmc:BAbS19_I09090"/>
<dbReference type="HOGENOM" id="CLU_009273_0_1_5"/>
<dbReference type="UniPathway" id="UPA00344"/>
<dbReference type="Proteomes" id="UP000002565">
    <property type="component" value="Chromosome 1"/>
</dbReference>
<dbReference type="GO" id="GO:0051539">
    <property type="term" value="F:4 iron, 4 sulfur cluster binding"/>
    <property type="evidence" value="ECO:0007669"/>
    <property type="project" value="UniProtKB-UniRule"/>
</dbReference>
<dbReference type="GO" id="GO:0061799">
    <property type="term" value="F:cyclic pyranopterin monophosphate synthase activity"/>
    <property type="evidence" value="ECO:0007669"/>
    <property type="project" value="TreeGrafter"/>
</dbReference>
<dbReference type="GO" id="GO:0061798">
    <property type="term" value="F:GTP 3',8'-cyclase activity"/>
    <property type="evidence" value="ECO:0007669"/>
    <property type="project" value="UniProtKB-UniRule"/>
</dbReference>
<dbReference type="GO" id="GO:0005525">
    <property type="term" value="F:GTP binding"/>
    <property type="evidence" value="ECO:0007669"/>
    <property type="project" value="UniProtKB-UniRule"/>
</dbReference>
<dbReference type="GO" id="GO:0046872">
    <property type="term" value="F:metal ion binding"/>
    <property type="evidence" value="ECO:0007669"/>
    <property type="project" value="UniProtKB-KW"/>
</dbReference>
<dbReference type="GO" id="GO:1904047">
    <property type="term" value="F:S-adenosyl-L-methionine binding"/>
    <property type="evidence" value="ECO:0007669"/>
    <property type="project" value="UniProtKB-UniRule"/>
</dbReference>
<dbReference type="GO" id="GO:0006777">
    <property type="term" value="P:Mo-molybdopterin cofactor biosynthetic process"/>
    <property type="evidence" value="ECO:0007669"/>
    <property type="project" value="UniProtKB-UniRule"/>
</dbReference>
<dbReference type="CDD" id="cd01335">
    <property type="entry name" value="Radical_SAM"/>
    <property type="match status" value="1"/>
</dbReference>
<dbReference type="CDD" id="cd21117">
    <property type="entry name" value="Twitch_MoaA"/>
    <property type="match status" value="1"/>
</dbReference>
<dbReference type="Gene3D" id="3.20.20.70">
    <property type="entry name" value="Aldolase class I"/>
    <property type="match status" value="1"/>
</dbReference>
<dbReference type="HAMAP" id="MF_01225_B">
    <property type="entry name" value="MoaA_B"/>
    <property type="match status" value="1"/>
</dbReference>
<dbReference type="InterPro" id="IPR013785">
    <property type="entry name" value="Aldolase_TIM"/>
</dbReference>
<dbReference type="InterPro" id="IPR006638">
    <property type="entry name" value="Elp3/MiaA/NifB-like_rSAM"/>
</dbReference>
<dbReference type="InterPro" id="IPR013483">
    <property type="entry name" value="MoaA"/>
</dbReference>
<dbReference type="InterPro" id="IPR000385">
    <property type="entry name" value="MoaA_NifB_PqqE_Fe-S-bd_CS"/>
</dbReference>
<dbReference type="InterPro" id="IPR010505">
    <property type="entry name" value="MoaA_twitch"/>
</dbReference>
<dbReference type="InterPro" id="IPR050105">
    <property type="entry name" value="MoCo_biosynth_MoaA/MoaC"/>
</dbReference>
<dbReference type="InterPro" id="IPR007197">
    <property type="entry name" value="rSAM"/>
</dbReference>
<dbReference type="NCBIfam" id="TIGR02666">
    <property type="entry name" value="moaA"/>
    <property type="match status" value="1"/>
</dbReference>
<dbReference type="PANTHER" id="PTHR22960:SF0">
    <property type="entry name" value="MOLYBDENUM COFACTOR BIOSYNTHESIS PROTEIN 1"/>
    <property type="match status" value="1"/>
</dbReference>
<dbReference type="PANTHER" id="PTHR22960">
    <property type="entry name" value="MOLYBDOPTERIN COFACTOR SYNTHESIS PROTEIN A"/>
    <property type="match status" value="1"/>
</dbReference>
<dbReference type="Pfam" id="PF13353">
    <property type="entry name" value="Fer4_12"/>
    <property type="match status" value="1"/>
</dbReference>
<dbReference type="Pfam" id="PF06463">
    <property type="entry name" value="Mob_synth_C"/>
    <property type="match status" value="1"/>
</dbReference>
<dbReference type="Pfam" id="PF04055">
    <property type="entry name" value="Radical_SAM"/>
    <property type="match status" value="1"/>
</dbReference>
<dbReference type="SFLD" id="SFLDG01383">
    <property type="entry name" value="cyclic_pyranopterin_phosphate"/>
    <property type="match status" value="1"/>
</dbReference>
<dbReference type="SFLD" id="SFLDG01216">
    <property type="entry name" value="thioether_bond_formation_requi"/>
    <property type="match status" value="1"/>
</dbReference>
<dbReference type="SMART" id="SM00729">
    <property type="entry name" value="Elp3"/>
    <property type="match status" value="1"/>
</dbReference>
<dbReference type="SUPFAM" id="SSF102114">
    <property type="entry name" value="Radical SAM enzymes"/>
    <property type="match status" value="1"/>
</dbReference>
<dbReference type="PROSITE" id="PS01305">
    <property type="entry name" value="MOAA_NIFB_PQQE"/>
    <property type="match status" value="1"/>
</dbReference>
<dbReference type="PROSITE" id="PS51918">
    <property type="entry name" value="RADICAL_SAM"/>
    <property type="match status" value="1"/>
</dbReference>
<comment type="function">
    <text evidence="1">Catalyzes the cyclization of GTP to (8S)-3',8-cyclo-7,8-dihydroguanosine 5'-triphosphate.</text>
</comment>
<comment type="catalytic activity">
    <reaction evidence="1">
        <text>GTP + AH2 + S-adenosyl-L-methionine = (8S)-3',8-cyclo-7,8-dihydroguanosine 5'-triphosphate + 5'-deoxyadenosine + L-methionine + A + H(+)</text>
        <dbReference type="Rhea" id="RHEA:49576"/>
        <dbReference type="ChEBI" id="CHEBI:13193"/>
        <dbReference type="ChEBI" id="CHEBI:15378"/>
        <dbReference type="ChEBI" id="CHEBI:17319"/>
        <dbReference type="ChEBI" id="CHEBI:17499"/>
        <dbReference type="ChEBI" id="CHEBI:37565"/>
        <dbReference type="ChEBI" id="CHEBI:57844"/>
        <dbReference type="ChEBI" id="CHEBI:59789"/>
        <dbReference type="ChEBI" id="CHEBI:131766"/>
        <dbReference type="EC" id="4.1.99.22"/>
    </reaction>
</comment>
<comment type="cofactor">
    <cofactor evidence="1">
        <name>[4Fe-4S] cluster</name>
        <dbReference type="ChEBI" id="CHEBI:49883"/>
    </cofactor>
    <text evidence="1">Binds 2 [4Fe-4S] clusters. Binds 1 [4Fe-4S] cluster coordinated with 3 cysteines and an exchangeable S-adenosyl-L-methionine and 1 [4Fe-4S] cluster coordinated with 3 cysteines and the GTP-derived substrate.</text>
</comment>
<comment type="pathway">
    <text evidence="1">Cofactor biosynthesis; molybdopterin biosynthesis.</text>
</comment>
<comment type="subunit">
    <text evidence="1">Monomer and homodimer.</text>
</comment>
<comment type="similarity">
    <text evidence="1">Belongs to the radical SAM superfamily. MoaA family.</text>
</comment>
<accession>B2S5I1</accession>
<reference key="1">
    <citation type="journal article" date="2008" name="PLoS ONE">
        <title>Genome sequence of Brucella abortus vaccine strain S19 compared to virulent strains yields candidate virulence genes.</title>
        <authorList>
            <person name="Crasta O.R."/>
            <person name="Folkerts O."/>
            <person name="Fei Z."/>
            <person name="Mane S.P."/>
            <person name="Evans C."/>
            <person name="Martino-Catt S."/>
            <person name="Bricker B."/>
            <person name="Yu G."/>
            <person name="Du L."/>
            <person name="Sobral B.W."/>
        </authorList>
    </citation>
    <scope>NUCLEOTIDE SEQUENCE [LARGE SCALE GENOMIC DNA]</scope>
    <source>
        <strain>S19</strain>
    </source>
</reference>
<gene>
    <name evidence="1" type="primary">moaA</name>
    <name type="ordered locus">BAbS19_I09090</name>
</gene>
<keyword id="KW-0004">4Fe-4S</keyword>
<keyword id="KW-0342">GTP-binding</keyword>
<keyword id="KW-0408">Iron</keyword>
<keyword id="KW-0411">Iron-sulfur</keyword>
<keyword id="KW-0456">Lyase</keyword>
<keyword id="KW-0479">Metal-binding</keyword>
<keyword id="KW-0501">Molybdenum cofactor biosynthesis</keyword>
<keyword id="KW-0547">Nucleotide-binding</keyword>
<keyword id="KW-0949">S-adenosyl-L-methionine</keyword>
<evidence type="ECO:0000255" key="1">
    <source>
        <dbReference type="HAMAP-Rule" id="MF_01225"/>
    </source>
</evidence>
<evidence type="ECO:0000255" key="2">
    <source>
        <dbReference type="PROSITE-ProRule" id="PRU01266"/>
    </source>
</evidence>